<feature type="chain" id="PRO_0000171814" description="Putative membrane protein insertion efficiency factor">
    <location>
        <begin position="1"/>
        <end position="71"/>
    </location>
</feature>
<accession>Q97CV9</accession>
<sequence length="71" mass="8213">MMRRILLKSIKFYRIYLSPLKRNACCKFIPTCSQYAIDAIEKYGALKGSFMAVKRILRCNPFSKGGYDPVK</sequence>
<evidence type="ECO:0000255" key="1">
    <source>
        <dbReference type="HAMAP-Rule" id="MF_00386"/>
    </source>
</evidence>
<dbReference type="EMBL" id="AE001437">
    <property type="protein sequence ID" value="AAK81657.1"/>
    <property type="molecule type" value="Genomic_DNA"/>
</dbReference>
<dbReference type="PIR" id="F97358">
    <property type="entry name" value="F97358"/>
</dbReference>
<dbReference type="RefSeq" id="NP_350317.1">
    <property type="nucleotide sequence ID" value="NC_003030.1"/>
</dbReference>
<dbReference type="STRING" id="272562.CA_C3737"/>
<dbReference type="KEGG" id="cac:CA_C3737"/>
<dbReference type="PATRIC" id="fig|272562.8.peg.3927"/>
<dbReference type="eggNOG" id="COG0759">
    <property type="taxonomic scope" value="Bacteria"/>
</dbReference>
<dbReference type="HOGENOM" id="CLU_144811_6_0_9"/>
<dbReference type="OrthoDB" id="9801753at2"/>
<dbReference type="Proteomes" id="UP000000814">
    <property type="component" value="Chromosome"/>
</dbReference>
<dbReference type="GO" id="GO:0005886">
    <property type="term" value="C:plasma membrane"/>
    <property type="evidence" value="ECO:0007669"/>
    <property type="project" value="UniProtKB-SubCell"/>
</dbReference>
<dbReference type="HAMAP" id="MF_00386">
    <property type="entry name" value="UPF0161_YidD"/>
    <property type="match status" value="1"/>
</dbReference>
<dbReference type="InterPro" id="IPR002696">
    <property type="entry name" value="Membr_insert_effic_factor_YidD"/>
</dbReference>
<dbReference type="NCBIfam" id="TIGR00278">
    <property type="entry name" value="membrane protein insertion efficiency factor YidD"/>
    <property type="match status" value="1"/>
</dbReference>
<dbReference type="PANTHER" id="PTHR33383">
    <property type="entry name" value="MEMBRANE PROTEIN INSERTION EFFICIENCY FACTOR-RELATED"/>
    <property type="match status" value="1"/>
</dbReference>
<dbReference type="PANTHER" id="PTHR33383:SF1">
    <property type="entry name" value="MEMBRANE PROTEIN INSERTION EFFICIENCY FACTOR-RELATED"/>
    <property type="match status" value="1"/>
</dbReference>
<dbReference type="Pfam" id="PF01809">
    <property type="entry name" value="YidD"/>
    <property type="match status" value="1"/>
</dbReference>
<dbReference type="SMART" id="SM01234">
    <property type="entry name" value="Haemolytic"/>
    <property type="match status" value="1"/>
</dbReference>
<name>YIDD_CLOAB</name>
<protein>
    <recommendedName>
        <fullName evidence="1">Putative membrane protein insertion efficiency factor</fullName>
    </recommendedName>
</protein>
<keyword id="KW-1003">Cell membrane</keyword>
<keyword id="KW-0472">Membrane</keyword>
<keyword id="KW-1185">Reference proteome</keyword>
<comment type="function">
    <text evidence="1">Could be involved in insertion of integral membrane proteins into the membrane.</text>
</comment>
<comment type="subcellular location">
    <subcellularLocation>
        <location evidence="1">Cell membrane</location>
        <topology evidence="1">Peripheral membrane protein</topology>
        <orientation evidence="1">Cytoplasmic side</orientation>
    </subcellularLocation>
</comment>
<comment type="similarity">
    <text evidence="1">Belongs to the UPF0161 family.</text>
</comment>
<gene>
    <name type="ordered locus">CA_C3737</name>
</gene>
<proteinExistence type="inferred from homology"/>
<organism>
    <name type="scientific">Clostridium acetobutylicum (strain ATCC 824 / DSM 792 / JCM 1419 / IAM 19013 / LMG 5710 / NBRC 13948 / NRRL B-527 / VKM B-1787 / 2291 / W)</name>
    <dbReference type="NCBI Taxonomy" id="272562"/>
    <lineage>
        <taxon>Bacteria</taxon>
        <taxon>Bacillati</taxon>
        <taxon>Bacillota</taxon>
        <taxon>Clostridia</taxon>
        <taxon>Eubacteriales</taxon>
        <taxon>Clostridiaceae</taxon>
        <taxon>Clostridium</taxon>
    </lineage>
</organism>
<reference key="1">
    <citation type="journal article" date="2001" name="J. Bacteriol.">
        <title>Genome sequence and comparative analysis of the solvent-producing bacterium Clostridium acetobutylicum.</title>
        <authorList>
            <person name="Noelling J."/>
            <person name="Breton G."/>
            <person name="Omelchenko M.V."/>
            <person name="Makarova K.S."/>
            <person name="Zeng Q."/>
            <person name="Gibson R."/>
            <person name="Lee H.M."/>
            <person name="Dubois J."/>
            <person name="Qiu D."/>
            <person name="Hitti J."/>
            <person name="Wolf Y.I."/>
            <person name="Tatusov R.L."/>
            <person name="Sabathe F."/>
            <person name="Doucette-Stamm L.A."/>
            <person name="Soucaille P."/>
            <person name="Daly M.J."/>
            <person name="Bennett G.N."/>
            <person name="Koonin E.V."/>
            <person name="Smith D.R."/>
        </authorList>
    </citation>
    <scope>NUCLEOTIDE SEQUENCE [LARGE SCALE GENOMIC DNA]</scope>
    <source>
        <strain>ATCC 824 / DSM 792 / JCM 1419 / IAM 19013 / LMG 5710 / NBRC 13948 / NRRL B-527 / VKM B-1787 / 2291 / W</strain>
    </source>
</reference>